<keyword id="KW-0479">Metal-binding</keyword>
<keyword id="KW-0687">Ribonucleoprotein</keyword>
<keyword id="KW-0689">Ribosomal protein</keyword>
<keyword id="KW-0694">RNA-binding</keyword>
<keyword id="KW-0699">rRNA-binding</keyword>
<keyword id="KW-0862">Zinc</keyword>
<dbReference type="EMBL" id="AE016823">
    <property type="protein sequence ID" value="AAS71413.1"/>
    <property type="molecule type" value="Genomic_DNA"/>
</dbReference>
<dbReference type="RefSeq" id="WP_002153498.1">
    <property type="nucleotide sequence ID" value="NC_005823.1"/>
</dbReference>
<dbReference type="SMR" id="Q72NH4"/>
<dbReference type="KEGG" id="lic:LIC_12860"/>
<dbReference type="HOGENOM" id="CLU_139869_3_0_12"/>
<dbReference type="Proteomes" id="UP000007037">
    <property type="component" value="Chromosome I"/>
</dbReference>
<dbReference type="GO" id="GO:0005737">
    <property type="term" value="C:cytoplasm"/>
    <property type="evidence" value="ECO:0007669"/>
    <property type="project" value="UniProtKB-ARBA"/>
</dbReference>
<dbReference type="GO" id="GO:0015935">
    <property type="term" value="C:small ribosomal subunit"/>
    <property type="evidence" value="ECO:0007669"/>
    <property type="project" value="TreeGrafter"/>
</dbReference>
<dbReference type="GO" id="GO:0019843">
    <property type="term" value="F:rRNA binding"/>
    <property type="evidence" value="ECO:0007669"/>
    <property type="project" value="UniProtKB-UniRule"/>
</dbReference>
<dbReference type="GO" id="GO:0003735">
    <property type="term" value="F:structural constituent of ribosome"/>
    <property type="evidence" value="ECO:0007669"/>
    <property type="project" value="InterPro"/>
</dbReference>
<dbReference type="GO" id="GO:0008270">
    <property type="term" value="F:zinc ion binding"/>
    <property type="evidence" value="ECO:0007669"/>
    <property type="project" value="UniProtKB-UniRule"/>
</dbReference>
<dbReference type="GO" id="GO:0006412">
    <property type="term" value="P:translation"/>
    <property type="evidence" value="ECO:0007669"/>
    <property type="project" value="UniProtKB-UniRule"/>
</dbReference>
<dbReference type="FunFam" id="4.10.830.10:FF:000001">
    <property type="entry name" value="30S ribosomal protein S14 type Z"/>
    <property type="match status" value="1"/>
</dbReference>
<dbReference type="Gene3D" id="4.10.830.10">
    <property type="entry name" value="30s Ribosomal Protein S14, Chain N"/>
    <property type="match status" value="1"/>
</dbReference>
<dbReference type="HAMAP" id="MF_01364_B">
    <property type="entry name" value="Ribosomal_uS14_2_B"/>
    <property type="match status" value="1"/>
</dbReference>
<dbReference type="InterPro" id="IPR001209">
    <property type="entry name" value="Ribosomal_uS14"/>
</dbReference>
<dbReference type="InterPro" id="IPR023053">
    <property type="entry name" value="Ribosomal_uS14_bact"/>
</dbReference>
<dbReference type="InterPro" id="IPR018271">
    <property type="entry name" value="Ribosomal_uS14_CS"/>
</dbReference>
<dbReference type="InterPro" id="IPR043140">
    <property type="entry name" value="Ribosomal_uS14_sf"/>
</dbReference>
<dbReference type="NCBIfam" id="NF005974">
    <property type="entry name" value="PRK08061.1"/>
    <property type="match status" value="1"/>
</dbReference>
<dbReference type="PANTHER" id="PTHR19836">
    <property type="entry name" value="30S RIBOSOMAL PROTEIN S14"/>
    <property type="match status" value="1"/>
</dbReference>
<dbReference type="PANTHER" id="PTHR19836:SF19">
    <property type="entry name" value="SMALL RIBOSOMAL SUBUNIT PROTEIN US14M"/>
    <property type="match status" value="1"/>
</dbReference>
<dbReference type="Pfam" id="PF00253">
    <property type="entry name" value="Ribosomal_S14"/>
    <property type="match status" value="1"/>
</dbReference>
<dbReference type="SUPFAM" id="SSF57716">
    <property type="entry name" value="Glucocorticoid receptor-like (DNA-binding domain)"/>
    <property type="match status" value="1"/>
</dbReference>
<dbReference type="PROSITE" id="PS00527">
    <property type="entry name" value="RIBOSOMAL_S14"/>
    <property type="match status" value="1"/>
</dbReference>
<name>RS14Z_LEPIC</name>
<evidence type="ECO:0000255" key="1">
    <source>
        <dbReference type="HAMAP-Rule" id="MF_01364"/>
    </source>
</evidence>
<evidence type="ECO:0000305" key="2"/>
<feature type="chain" id="PRO_0000130898" description="Small ribosomal subunit protein uS14">
    <location>
        <begin position="1"/>
        <end position="61"/>
    </location>
</feature>
<feature type="binding site" evidence="1">
    <location>
        <position position="24"/>
    </location>
    <ligand>
        <name>Zn(2+)</name>
        <dbReference type="ChEBI" id="CHEBI:29105"/>
    </ligand>
</feature>
<feature type="binding site" evidence="1">
    <location>
        <position position="27"/>
    </location>
    <ligand>
        <name>Zn(2+)</name>
        <dbReference type="ChEBI" id="CHEBI:29105"/>
    </ligand>
</feature>
<feature type="binding site" evidence="1">
    <location>
        <position position="40"/>
    </location>
    <ligand>
        <name>Zn(2+)</name>
        <dbReference type="ChEBI" id="CHEBI:29105"/>
    </ligand>
</feature>
<feature type="binding site" evidence="1">
    <location>
        <position position="43"/>
    </location>
    <ligand>
        <name>Zn(2+)</name>
        <dbReference type="ChEBI" id="CHEBI:29105"/>
    </ligand>
</feature>
<gene>
    <name evidence="1" type="primary">rpsZ</name>
    <name evidence="1" type="synonym">rpsN</name>
    <name type="ordered locus">LIC_12860</name>
</gene>
<proteinExistence type="inferred from homology"/>
<sequence length="61" mass="7208">MAKTSITVRHQRKKKFEVREYNRCPICGRSRGYLRRFDMCRICFRKLASGAQIPGVVKSSW</sequence>
<organism>
    <name type="scientific">Leptospira interrogans serogroup Icterohaemorrhagiae serovar copenhageni (strain Fiocruz L1-130)</name>
    <dbReference type="NCBI Taxonomy" id="267671"/>
    <lineage>
        <taxon>Bacteria</taxon>
        <taxon>Pseudomonadati</taxon>
        <taxon>Spirochaetota</taxon>
        <taxon>Spirochaetia</taxon>
        <taxon>Leptospirales</taxon>
        <taxon>Leptospiraceae</taxon>
        <taxon>Leptospira</taxon>
    </lineage>
</organism>
<reference key="1">
    <citation type="journal article" date="2004" name="J. Bacteriol.">
        <title>Comparative genomics of two Leptospira interrogans serovars reveals novel insights into physiology and pathogenesis.</title>
        <authorList>
            <person name="Nascimento A.L.T.O."/>
            <person name="Ko A.I."/>
            <person name="Martins E.A.L."/>
            <person name="Monteiro-Vitorello C.B."/>
            <person name="Ho P.L."/>
            <person name="Haake D.A."/>
            <person name="Verjovski-Almeida S."/>
            <person name="Hartskeerl R.A."/>
            <person name="Marques M.V."/>
            <person name="Oliveira M.C."/>
            <person name="Menck C.F.M."/>
            <person name="Leite L.C.C."/>
            <person name="Carrer H."/>
            <person name="Coutinho L.L."/>
            <person name="Degrave W.M."/>
            <person name="Dellagostin O.A."/>
            <person name="El-Dorry H."/>
            <person name="Ferro E.S."/>
            <person name="Ferro M.I.T."/>
            <person name="Furlan L.R."/>
            <person name="Gamberini M."/>
            <person name="Giglioti E.A."/>
            <person name="Goes-Neto A."/>
            <person name="Goldman G.H."/>
            <person name="Goldman M.H.S."/>
            <person name="Harakava R."/>
            <person name="Jeronimo S.M.B."/>
            <person name="Junqueira-de-Azevedo I.L.M."/>
            <person name="Kimura E.T."/>
            <person name="Kuramae E.E."/>
            <person name="Lemos E.G.M."/>
            <person name="Lemos M.V.F."/>
            <person name="Marino C.L."/>
            <person name="Nunes L.R."/>
            <person name="de Oliveira R.C."/>
            <person name="Pereira G.G."/>
            <person name="Reis M.S."/>
            <person name="Schriefer A."/>
            <person name="Siqueira W.J."/>
            <person name="Sommer P."/>
            <person name="Tsai S.M."/>
            <person name="Simpson A.J.G."/>
            <person name="Ferro J.A."/>
            <person name="Camargo L.E.A."/>
            <person name="Kitajima J.P."/>
            <person name="Setubal J.C."/>
            <person name="Van Sluys M.A."/>
        </authorList>
    </citation>
    <scope>NUCLEOTIDE SEQUENCE [LARGE SCALE GENOMIC DNA]</scope>
    <source>
        <strain>Fiocruz L1-130</strain>
    </source>
</reference>
<comment type="function">
    <text evidence="1">Binds 16S rRNA, required for the assembly of 30S particles and may also be responsible for determining the conformation of the 16S rRNA at the A site.</text>
</comment>
<comment type="cofactor">
    <cofactor evidence="1">
        <name>Zn(2+)</name>
        <dbReference type="ChEBI" id="CHEBI:29105"/>
    </cofactor>
    <text evidence="1">Binds 1 zinc ion per subunit.</text>
</comment>
<comment type="subunit">
    <text evidence="1">Part of the 30S ribosomal subunit. Contacts proteins S3 and S10.</text>
</comment>
<comment type="similarity">
    <text evidence="1">Belongs to the universal ribosomal protein uS14 family. Zinc-binding uS14 subfamily.</text>
</comment>
<accession>Q72NH4</accession>
<protein>
    <recommendedName>
        <fullName evidence="1">Small ribosomal subunit protein uS14</fullName>
    </recommendedName>
    <alternativeName>
        <fullName evidence="2">30S ribosomal protein S14 type Z</fullName>
    </alternativeName>
</protein>